<sequence length="433" mass="47996">MKALSEVFGKLVEKIRGVSYIDEATLQDLSREIQRALLKADVPLDMVKAFTDAAVKRIKEEKPPAGIPPREYLLYVLYEELVKLLGGEQPPEFKPTKKPYVVLLLGVEGSGKTTTAAKLAKLLVKRGYKVGLVETDTVRPAAFDQLRQLAEKIGVPFYGERDGKDAVEIARRGVQNLKNLDVVIVDTAGRHRNEEALLQEVKAIYEAVSPDEVVLVIDATVGKLAAAQAEAFMRYLPIHSVIITKMDSTARGGGALAAVAKTGAKVKFIGVGEDVDELEMFIPRKFVARVLGMGDLDALVERIKAVFEEEQVIQEIESGKLDLLTFKKQIDGLLKLGPLSKVFQMLPGGLAAKISEEQIELSQKNLKKWRAILSSMTVEELKNPELLNASRIRRIALGAGVTPRDVKEMLTVYENLKRMSKTLKRQLRMKMPR</sequence>
<keyword id="KW-0963">Cytoplasm</keyword>
<keyword id="KW-0342">GTP-binding</keyword>
<keyword id="KW-0378">Hydrolase</keyword>
<keyword id="KW-0547">Nucleotide-binding</keyword>
<keyword id="KW-0687">Ribonucleoprotein</keyword>
<keyword id="KW-0694">RNA-binding</keyword>
<keyword id="KW-0733">Signal recognition particle</keyword>
<accession>B1Y9L4</accession>
<protein>
    <recommendedName>
        <fullName evidence="1">Signal recognition particle 54 kDa protein</fullName>
        <shortName evidence="1">SRP54</shortName>
        <ecNumber evidence="1">3.6.5.4</ecNumber>
    </recommendedName>
</protein>
<reference key="1">
    <citation type="submission" date="2008-03" db="EMBL/GenBank/DDBJ databases">
        <title>Complete sequence of Thermoproteus neutrophilus V24Sta.</title>
        <authorList>
            <consortium name="US DOE Joint Genome Institute"/>
            <person name="Copeland A."/>
            <person name="Lucas S."/>
            <person name="Lapidus A."/>
            <person name="Glavina del Rio T."/>
            <person name="Dalin E."/>
            <person name="Tice H."/>
            <person name="Bruce D."/>
            <person name="Goodwin L."/>
            <person name="Pitluck S."/>
            <person name="Sims D."/>
            <person name="Brettin T."/>
            <person name="Detter J.C."/>
            <person name="Han C."/>
            <person name="Kuske C.R."/>
            <person name="Schmutz J."/>
            <person name="Larimer F."/>
            <person name="Land M."/>
            <person name="Hauser L."/>
            <person name="Kyrpides N."/>
            <person name="Mikhailova N."/>
            <person name="Biddle J.F."/>
            <person name="Zhang Z."/>
            <person name="Fitz-Gibbon S.T."/>
            <person name="Lowe T.M."/>
            <person name="Saltikov C."/>
            <person name="House C.H."/>
            <person name="Richardson P."/>
        </authorList>
    </citation>
    <scope>NUCLEOTIDE SEQUENCE [LARGE SCALE GENOMIC DNA]</scope>
    <source>
        <strain>DSM 2338 / JCM 9278 / NBRC 100436 / V24Sta</strain>
    </source>
</reference>
<gene>
    <name evidence="1" type="primary">srp54</name>
    <name type="ordered locus">Tneu_1519</name>
</gene>
<comment type="function">
    <text evidence="1">Involved in targeting and insertion of nascent membrane proteins into the cytoplasmic membrane. Binds to the hydrophobic signal sequence of the ribosome-nascent chain (RNC) as it emerges from the ribosomes. The SRP-RNC complex is then targeted to the cytoplasmic membrane where it interacts with the SRP receptor FtsY.</text>
</comment>
<comment type="catalytic activity">
    <reaction evidence="1">
        <text>GTP + H2O = GDP + phosphate + H(+)</text>
        <dbReference type="Rhea" id="RHEA:19669"/>
        <dbReference type="ChEBI" id="CHEBI:15377"/>
        <dbReference type="ChEBI" id="CHEBI:15378"/>
        <dbReference type="ChEBI" id="CHEBI:37565"/>
        <dbReference type="ChEBI" id="CHEBI:43474"/>
        <dbReference type="ChEBI" id="CHEBI:58189"/>
        <dbReference type="EC" id="3.6.5.4"/>
    </reaction>
</comment>
<comment type="subunit">
    <text evidence="1">Part of the signal recognition particle protein translocation system, which is composed of SRP and FtsY. Archaeal SRP consists of a 7S RNA molecule of 300 nucleotides and two protein subunits: SRP54 and SRP19.</text>
</comment>
<comment type="subcellular location">
    <subcellularLocation>
        <location evidence="1">Cytoplasm</location>
    </subcellularLocation>
    <text evidence="1">The SRP-RNC complex is targeted to the cytoplasmic membrane.</text>
</comment>
<comment type="domain">
    <text evidence="1">Composed of three domains: the N-terminal N domain, which is responsible for interactions with the ribosome, the central G domain, which binds GTP, and the C-terminal M domain, which binds the RNA and the signal sequence of the RNC.</text>
</comment>
<comment type="similarity">
    <text evidence="1">Belongs to the GTP-binding SRP family. SRP54 subfamily.</text>
</comment>
<organism>
    <name type="scientific">Pyrobaculum neutrophilum (strain DSM 2338 / JCM 9278 / NBRC 100436 / V24Sta)</name>
    <name type="common">Thermoproteus neutrophilus</name>
    <dbReference type="NCBI Taxonomy" id="444157"/>
    <lineage>
        <taxon>Archaea</taxon>
        <taxon>Thermoproteota</taxon>
        <taxon>Thermoprotei</taxon>
        <taxon>Thermoproteales</taxon>
        <taxon>Thermoproteaceae</taxon>
        <taxon>Pyrobaculum</taxon>
    </lineage>
</organism>
<evidence type="ECO:0000255" key="1">
    <source>
        <dbReference type="HAMAP-Rule" id="MF_00306"/>
    </source>
</evidence>
<proteinExistence type="inferred from homology"/>
<feature type="chain" id="PRO_1000119522" description="Signal recognition particle 54 kDa protein">
    <location>
        <begin position="1"/>
        <end position="433"/>
    </location>
</feature>
<feature type="binding site" evidence="1">
    <location>
        <begin position="106"/>
        <end position="113"/>
    </location>
    <ligand>
        <name>GTP</name>
        <dbReference type="ChEBI" id="CHEBI:37565"/>
    </ligand>
</feature>
<feature type="binding site" evidence="1">
    <location>
        <begin position="186"/>
        <end position="190"/>
    </location>
    <ligand>
        <name>GTP</name>
        <dbReference type="ChEBI" id="CHEBI:37565"/>
    </ligand>
</feature>
<feature type="binding site" evidence="1">
    <location>
        <begin position="244"/>
        <end position="247"/>
    </location>
    <ligand>
        <name>GTP</name>
        <dbReference type="ChEBI" id="CHEBI:37565"/>
    </ligand>
</feature>
<name>SRP54_PYRNV</name>
<dbReference type="EC" id="3.6.5.4" evidence="1"/>
<dbReference type="EMBL" id="CP001014">
    <property type="protein sequence ID" value="ACB40443.1"/>
    <property type="molecule type" value="Genomic_DNA"/>
</dbReference>
<dbReference type="RefSeq" id="WP_012350862.1">
    <property type="nucleotide sequence ID" value="NC_010525.1"/>
</dbReference>
<dbReference type="SMR" id="B1Y9L4"/>
<dbReference type="STRING" id="444157.Tneu_1519"/>
<dbReference type="GeneID" id="6166059"/>
<dbReference type="KEGG" id="tne:Tneu_1519"/>
<dbReference type="eggNOG" id="arCOG01228">
    <property type="taxonomic scope" value="Archaea"/>
</dbReference>
<dbReference type="HOGENOM" id="CLU_009301_6_0_2"/>
<dbReference type="OrthoDB" id="52849at2157"/>
<dbReference type="Proteomes" id="UP000001694">
    <property type="component" value="Chromosome"/>
</dbReference>
<dbReference type="GO" id="GO:0048500">
    <property type="term" value="C:signal recognition particle"/>
    <property type="evidence" value="ECO:0007669"/>
    <property type="project" value="UniProtKB-UniRule"/>
</dbReference>
<dbReference type="GO" id="GO:0008312">
    <property type="term" value="F:7S RNA binding"/>
    <property type="evidence" value="ECO:0007669"/>
    <property type="project" value="UniProtKB-UniRule"/>
</dbReference>
<dbReference type="GO" id="GO:0016887">
    <property type="term" value="F:ATP hydrolysis activity"/>
    <property type="evidence" value="ECO:0007669"/>
    <property type="project" value="InterPro"/>
</dbReference>
<dbReference type="GO" id="GO:0005525">
    <property type="term" value="F:GTP binding"/>
    <property type="evidence" value="ECO:0007669"/>
    <property type="project" value="UniProtKB-UniRule"/>
</dbReference>
<dbReference type="GO" id="GO:0003924">
    <property type="term" value="F:GTPase activity"/>
    <property type="evidence" value="ECO:0007669"/>
    <property type="project" value="UniProtKB-UniRule"/>
</dbReference>
<dbReference type="GO" id="GO:0006614">
    <property type="term" value="P:SRP-dependent cotranslational protein targeting to membrane"/>
    <property type="evidence" value="ECO:0007669"/>
    <property type="project" value="InterPro"/>
</dbReference>
<dbReference type="CDD" id="cd17875">
    <property type="entry name" value="SRP54_G"/>
    <property type="match status" value="1"/>
</dbReference>
<dbReference type="FunFam" id="3.40.50.300:FF:000022">
    <property type="entry name" value="Signal recognition particle 54 kDa subunit"/>
    <property type="match status" value="1"/>
</dbReference>
<dbReference type="Gene3D" id="3.40.50.300">
    <property type="entry name" value="P-loop containing nucleotide triphosphate hydrolases"/>
    <property type="match status" value="1"/>
</dbReference>
<dbReference type="Gene3D" id="1.20.120.140">
    <property type="entry name" value="Signal recognition particle SRP54, nucleotide-binding domain"/>
    <property type="match status" value="1"/>
</dbReference>
<dbReference type="Gene3D" id="1.10.260.30">
    <property type="entry name" value="Signal recognition particle, SRP54 subunit, M-domain"/>
    <property type="match status" value="1"/>
</dbReference>
<dbReference type="HAMAP" id="MF_00306">
    <property type="entry name" value="SRP54"/>
    <property type="match status" value="1"/>
</dbReference>
<dbReference type="InterPro" id="IPR003593">
    <property type="entry name" value="AAA+_ATPase"/>
</dbReference>
<dbReference type="InterPro" id="IPR027417">
    <property type="entry name" value="P-loop_NTPase"/>
</dbReference>
<dbReference type="InterPro" id="IPR036891">
    <property type="entry name" value="Signal_recog_part_SRP54_M_sf"/>
</dbReference>
<dbReference type="InterPro" id="IPR013822">
    <property type="entry name" value="Signal_recog_particl_SRP54_hlx"/>
</dbReference>
<dbReference type="InterPro" id="IPR004125">
    <property type="entry name" value="Signal_recog_particle_SRP54_M"/>
</dbReference>
<dbReference type="InterPro" id="IPR036225">
    <property type="entry name" value="SRP/SRP_N"/>
</dbReference>
<dbReference type="InterPro" id="IPR022941">
    <property type="entry name" value="SRP54"/>
</dbReference>
<dbReference type="InterPro" id="IPR000897">
    <property type="entry name" value="SRP54_GTPase_dom"/>
</dbReference>
<dbReference type="InterPro" id="IPR042101">
    <property type="entry name" value="SRP54_N_sf"/>
</dbReference>
<dbReference type="PANTHER" id="PTHR11564">
    <property type="entry name" value="SIGNAL RECOGNITION PARTICLE 54K PROTEIN SRP54"/>
    <property type="match status" value="1"/>
</dbReference>
<dbReference type="PANTHER" id="PTHR11564:SF5">
    <property type="entry name" value="SIGNAL RECOGNITION PARTICLE SUBUNIT SRP54"/>
    <property type="match status" value="1"/>
</dbReference>
<dbReference type="Pfam" id="PF00448">
    <property type="entry name" value="SRP54"/>
    <property type="match status" value="1"/>
</dbReference>
<dbReference type="Pfam" id="PF02881">
    <property type="entry name" value="SRP54_N"/>
    <property type="match status" value="1"/>
</dbReference>
<dbReference type="Pfam" id="PF02978">
    <property type="entry name" value="SRP_SPB"/>
    <property type="match status" value="1"/>
</dbReference>
<dbReference type="SMART" id="SM00382">
    <property type="entry name" value="AAA"/>
    <property type="match status" value="1"/>
</dbReference>
<dbReference type="SMART" id="SM00962">
    <property type="entry name" value="SRP54"/>
    <property type="match status" value="1"/>
</dbReference>
<dbReference type="SMART" id="SM00963">
    <property type="entry name" value="SRP54_N"/>
    <property type="match status" value="1"/>
</dbReference>
<dbReference type="SUPFAM" id="SSF47364">
    <property type="entry name" value="Domain of the SRP/SRP receptor G-proteins"/>
    <property type="match status" value="1"/>
</dbReference>
<dbReference type="SUPFAM" id="SSF52540">
    <property type="entry name" value="P-loop containing nucleoside triphosphate hydrolases"/>
    <property type="match status" value="1"/>
</dbReference>
<dbReference type="SUPFAM" id="SSF47446">
    <property type="entry name" value="Signal peptide-binding domain"/>
    <property type="match status" value="1"/>
</dbReference>